<accession>Q7TNB8</accession>
<accession>Q3UE14</accession>
<accession>Q6P3A3</accession>
<accession>Q70X02</accession>
<sequence length="1349" mass="149294">MLAVEPTMDGDFPPHELPPPGGGIQLQNRLLHCPWWGSFSPSLYPTFSSENQQFVGSTPFLGGQSCPETSYPTTATVPSFFSKSSDFPQDPSCLEDLSNASVFSSSVDSLSDIPDTPDFLQADSLNEVPTIWDVSTTSTTHDKLFIPSGPFSAPEDPVTSLSSTPLLISYQSHSQPEEEEGEEEEETEELGHAETYADYVPSKSKIGKQHPDRVVETSTLSSVPPPDITYTLALPTSDNSTLSALQLEAITYACQQHEVLLPSGQRAGFLIGDGAGVGKGRTVAGIIVENYLRGRKKALWFSASNDLKYDAERDLRDIEAPGIAVHALSKIKYGDNTTSEGVLFATYSALIGESQAGGQHRTRLRQILQWCGEGFDGVIVFDECHKAKNASSTKMGKAVLDLQSKLPQARVVYASATGASEPRNMIYMSRLGIWGEGTPFRTFEEFLHAIEKRGVGAMEIVAMDMKVSGMYIARQLSFSGVTFRIEEIPLSPAFQQVYNRAARLWAEALSVFQQAADWIGLESRKSLWGQFWSAHQRFFKYLCIAAKVHRLVELAQQELSRDKCVVIGLQSTGEARTREVLDENEGRLDCFVSAAEGVFLSLIQKHFPSTRRRRDRGGGKRKRRPRGRGPKASRLSLEAAGVIRISDGSSTESDAGLDSDFNSSPESLVDDDVVIVDAPTHPTDDRGSLYPLQRDLQGPGVVERVERLKQGLLAKVRALGRELPVNTLDQLIHQLGGPECVAEMTGRKGRVVSRPDGTVVFESRAEQGLSIDHVNLREKQRFMSGEKLVAIISEASSSGVSLQADRRVQNQRRRVHMTLELPWSADRAIQQFGRTHRSNQVSAPEYVFLISELAGERRFASIVAKRLESLGALTHGDRRATESRDLSKYNFENKYGARALSRVLATIMGQTDNRVPLPQGYPGGDTAFFRDMKQGLLSVGIGSRESRSGCLDVEKDCSITKFLNRILGLEVHKQNALFQYFSDTFDHLIEIDKKEGRYDMGILDLAPGINEIHEESQQVFLAPGHPQDGQVVFYKQISVDRGMKWEEALTRSLELKGPYDGFYLSYKVRGSKMSCLLAEQNRGEYFTVYKPNIGRQSQLETLDSLCRKFHRVTVEEAREPWESSYALSLEHCSHTTWNQRCRLTQEGKCCAQGLRLRHHYMLCGALLRVWGRIAAVMADVSSSSYLQIVRLKTKDKKKQVGIKIPEGCVHRVLQELQLMDAEVKRRSTHGLAARPPTPRAITLPCGPGEVLDLTYSPPAEAFPTPPRFAFPSLPPPDPSSLMLGARDPATNPVELAHQSCDINFREVLEDMLRSLRAGPTETPAPLVGVGGGGTERQSVIHFSPPFPNS</sequence>
<gene>
    <name type="primary">Sbno2</name>
    <name type="synonym">Sno</name>
    <name type="synonym">Stno</name>
</gene>
<feature type="chain" id="PRO_0000314561" description="Protein strawberry notch homolog 2">
    <location>
        <begin position="1"/>
        <end position="1349"/>
    </location>
</feature>
<feature type="region of interest" description="Disordered" evidence="2">
    <location>
        <begin position="170"/>
        <end position="212"/>
    </location>
</feature>
<feature type="region of interest" description="Disordered" evidence="2">
    <location>
        <begin position="609"/>
        <end position="633"/>
    </location>
</feature>
<feature type="region of interest" description="Disordered" evidence="2">
    <location>
        <begin position="1319"/>
        <end position="1349"/>
    </location>
</feature>
<feature type="compositionally biased region" description="Acidic residues" evidence="2">
    <location>
        <begin position="177"/>
        <end position="188"/>
    </location>
</feature>
<feature type="compositionally biased region" description="Basic residues" evidence="2">
    <location>
        <begin position="609"/>
        <end position="631"/>
    </location>
</feature>
<feature type="splice variant" id="VSP_030305" description="In isoform 3." evidence="6">
    <location>
        <begin position="1"/>
        <end position="74"/>
    </location>
</feature>
<feature type="splice variant" id="VSP_030306" description="In isoform 3." evidence="6">
    <original>ATVPSFFSKSSDFPQ</original>
    <variation>MSQLRFWLQFAALNK</variation>
    <location>
        <begin position="75"/>
        <end position="89"/>
    </location>
</feature>
<feature type="splice variant" id="VSP_030307" description="In isoform 3." evidence="6">
    <original>SLYPLQRDLQGPGVVERVERLKQGLLAKVRALGRELPVNTLD</original>
    <variation>EPPSSSQTQGSRHNHMRPIPPNTLVTDGETETHSQGQGYAIK</variation>
    <location>
        <begin position="688"/>
        <end position="729"/>
    </location>
</feature>
<feature type="splice variant" id="VSP_030308" description="In isoform 3." evidence="6">
    <location>
        <begin position="730"/>
        <end position="1349"/>
    </location>
</feature>
<feature type="splice variant" id="VSP_030309" description="In isoform 2." evidence="7 8">
    <location>
        <position position="1036"/>
    </location>
</feature>
<feature type="sequence conflict" description="In Ref. 2; BAE29097." evidence="9" ref="2">
    <original>A</original>
    <variation>G</variation>
    <location>
        <position position="595"/>
    </location>
</feature>
<feature type="sequence conflict" description="In Ref. 2; BAE29097." evidence="9" ref="2">
    <original>H</original>
    <variation>R</variation>
    <location>
        <position position="972"/>
    </location>
</feature>
<name>SBNO2_MOUSE</name>
<comment type="function">
    <text evidence="1 4">Acts as a transcriptional coregulator, that can have both coactivator and corepressor functions (PubMed:18025162, PubMed:23980096). Inhibits the DCSTAMP-repressive activity of TAL1, hence enhancing the access of the transcription factor MITF to the DC-STAMP promoter in osteoclast (PubMed:23980096). Plays a role in bone homeostasis; required as a positive regulator in TNFSF11//RANKL-mediated osteoclast fusion via a DCSTAMP-dependent pathway (PubMed:23980096). May also be required in the regulation of osteoblast differentiation (PubMed:23980096). Involved in the transcriptional corepression of NF-kappaB in macrophages. Plays a role as a regulator in the pro-inflammatory cascade (By similarity).</text>
</comment>
<comment type="subunit">
    <text evidence="4">Interacts with TAL1; this interaction inhibits TAL1 occupancy of the DCSTAMP promoter, leading to the activation of the DCSTAMP promoter by the transcription factor MITF (PubMed:23980096).</text>
</comment>
<comment type="alternative products">
    <event type="alternative splicing"/>
    <isoform>
        <id>Q7TNB8-1</id>
        <name>1</name>
        <sequence type="displayed"/>
    </isoform>
    <isoform>
        <id>Q7TNB8-2</id>
        <name>2</name>
        <sequence type="described" ref="VSP_030309"/>
    </isoform>
    <isoform>
        <id>Q7TNB8-3</id>
        <name>3</name>
        <sequence type="described" ref="VSP_030305 VSP_030306 VSP_030307 VSP_030308"/>
    </isoform>
</comment>
<comment type="tissue specificity">
    <text evidence="3 4">Expressed in the spleen and bone marrow, and to a lesser extent in the kidney, liver, brain, skin, heart and muscle (PubMed:23980096). Expressed predominantly in osteoclasts, and to a lesser extent in T-cells, B-cells and osteoblasts (PubMed:23980096). Expressed in macrophages (PubMed:18025162).</text>
</comment>
<comment type="induction">
    <text evidence="3 4 5">Up-regulated by interleukin IL6 together with soluble interleukin receptor IL6R in astrocytes (PubMed:25903009). Up-regulated by interleukins such as IL1B or tumor necrosis factor TNF in astrocytes (at protein level) (PubMed:25903009). Up-regulated also by other cytokines such as interleukin IL11, oncostatin M (OSM) and leukemia inhibitory factor (LIF) (PubMed:25903009). Up-regulated by lipopolysaccharide (LPS) (PubMed:23980096, PubMed:25903009). Up-regulated by interleukin IL10 in a STAT3-dependent manner in bone marrow derived macrophages (PubMed:18025162). Up-regulated by TNFSF11//RANKL in a c-Fos/FOS-dependent manner (PubMed:23980096).</text>
</comment>
<comment type="disruption phenotype">
    <text evidence="4">Mice display a severe osteopetrotic phenotype characterized with an increased bone mass (PubMed:23980096). Show a reduction in the osteoclast surface/bone surface and eroded surface/bone surface ratio, but the osteoclast number/bone surface ratio is normal (PubMed:23980096). Show also a reduction in nuclei/osteoclast ratio (PubMed:23980096). Exhibit an impairment in TNFSF11//RANKL-mediated osteoclast fusion (PubMed:23980096). Show a slight inhibition of osteoblast differentiation (PubMed:23980096).</text>
</comment>
<comment type="similarity">
    <text evidence="9">Belongs to the SBNO family.</text>
</comment>
<keyword id="KW-0010">Activator</keyword>
<keyword id="KW-0025">Alternative splicing</keyword>
<keyword id="KW-0221">Differentiation</keyword>
<keyword id="KW-0892">Osteogenesis</keyword>
<keyword id="KW-1185">Reference proteome</keyword>
<keyword id="KW-0678">Repressor</keyword>
<keyword id="KW-0804">Transcription</keyword>
<keyword id="KW-0805">Transcription regulation</keyword>
<reference key="1">
    <citation type="submission" date="2002-10" db="EMBL/GenBank/DDBJ databases">
        <title>Strawberry notch operates in the niche of melanocyte stem cells.</title>
        <authorList>
            <person name="Da Silva N.R."/>
            <person name="Aubin-Houzelstein G."/>
            <person name="Bernex F."/>
            <person name="Salaun P."/>
            <person name="Panthier J.J."/>
        </authorList>
    </citation>
    <scope>NUCLEOTIDE SEQUENCE [MRNA] (ISOFORM 2)</scope>
    <source>
        <strain>PRM/Alf</strain>
        <tissue>Skin</tissue>
    </source>
</reference>
<reference key="2">
    <citation type="journal article" date="2005" name="Science">
        <title>The transcriptional landscape of the mammalian genome.</title>
        <authorList>
            <person name="Carninci P."/>
            <person name="Kasukawa T."/>
            <person name="Katayama S."/>
            <person name="Gough J."/>
            <person name="Frith M.C."/>
            <person name="Maeda N."/>
            <person name="Oyama R."/>
            <person name="Ravasi T."/>
            <person name="Lenhard B."/>
            <person name="Wells C."/>
            <person name="Kodzius R."/>
            <person name="Shimokawa K."/>
            <person name="Bajic V.B."/>
            <person name="Brenner S.E."/>
            <person name="Batalov S."/>
            <person name="Forrest A.R."/>
            <person name="Zavolan M."/>
            <person name="Davis M.J."/>
            <person name="Wilming L.G."/>
            <person name="Aidinis V."/>
            <person name="Allen J.E."/>
            <person name="Ambesi-Impiombato A."/>
            <person name="Apweiler R."/>
            <person name="Aturaliya R.N."/>
            <person name="Bailey T.L."/>
            <person name="Bansal M."/>
            <person name="Baxter L."/>
            <person name="Beisel K.W."/>
            <person name="Bersano T."/>
            <person name="Bono H."/>
            <person name="Chalk A.M."/>
            <person name="Chiu K.P."/>
            <person name="Choudhary V."/>
            <person name="Christoffels A."/>
            <person name="Clutterbuck D.R."/>
            <person name="Crowe M.L."/>
            <person name="Dalla E."/>
            <person name="Dalrymple B.P."/>
            <person name="de Bono B."/>
            <person name="Della Gatta G."/>
            <person name="di Bernardo D."/>
            <person name="Down T."/>
            <person name="Engstrom P."/>
            <person name="Fagiolini M."/>
            <person name="Faulkner G."/>
            <person name="Fletcher C.F."/>
            <person name="Fukushima T."/>
            <person name="Furuno M."/>
            <person name="Futaki S."/>
            <person name="Gariboldi M."/>
            <person name="Georgii-Hemming P."/>
            <person name="Gingeras T.R."/>
            <person name="Gojobori T."/>
            <person name="Green R.E."/>
            <person name="Gustincich S."/>
            <person name="Harbers M."/>
            <person name="Hayashi Y."/>
            <person name="Hensch T.K."/>
            <person name="Hirokawa N."/>
            <person name="Hill D."/>
            <person name="Huminiecki L."/>
            <person name="Iacono M."/>
            <person name="Ikeo K."/>
            <person name="Iwama A."/>
            <person name="Ishikawa T."/>
            <person name="Jakt M."/>
            <person name="Kanapin A."/>
            <person name="Katoh M."/>
            <person name="Kawasawa Y."/>
            <person name="Kelso J."/>
            <person name="Kitamura H."/>
            <person name="Kitano H."/>
            <person name="Kollias G."/>
            <person name="Krishnan S.P."/>
            <person name="Kruger A."/>
            <person name="Kummerfeld S.K."/>
            <person name="Kurochkin I.V."/>
            <person name="Lareau L.F."/>
            <person name="Lazarevic D."/>
            <person name="Lipovich L."/>
            <person name="Liu J."/>
            <person name="Liuni S."/>
            <person name="McWilliam S."/>
            <person name="Madan Babu M."/>
            <person name="Madera M."/>
            <person name="Marchionni L."/>
            <person name="Matsuda H."/>
            <person name="Matsuzawa S."/>
            <person name="Miki H."/>
            <person name="Mignone F."/>
            <person name="Miyake S."/>
            <person name="Morris K."/>
            <person name="Mottagui-Tabar S."/>
            <person name="Mulder N."/>
            <person name="Nakano N."/>
            <person name="Nakauchi H."/>
            <person name="Ng P."/>
            <person name="Nilsson R."/>
            <person name="Nishiguchi S."/>
            <person name="Nishikawa S."/>
            <person name="Nori F."/>
            <person name="Ohara O."/>
            <person name="Okazaki Y."/>
            <person name="Orlando V."/>
            <person name="Pang K.C."/>
            <person name="Pavan W.J."/>
            <person name="Pavesi G."/>
            <person name="Pesole G."/>
            <person name="Petrovsky N."/>
            <person name="Piazza S."/>
            <person name="Reed J."/>
            <person name="Reid J.F."/>
            <person name="Ring B.Z."/>
            <person name="Ringwald M."/>
            <person name="Rost B."/>
            <person name="Ruan Y."/>
            <person name="Salzberg S.L."/>
            <person name="Sandelin A."/>
            <person name="Schneider C."/>
            <person name="Schoenbach C."/>
            <person name="Sekiguchi K."/>
            <person name="Semple C.A."/>
            <person name="Seno S."/>
            <person name="Sessa L."/>
            <person name="Sheng Y."/>
            <person name="Shibata Y."/>
            <person name="Shimada H."/>
            <person name="Shimada K."/>
            <person name="Silva D."/>
            <person name="Sinclair B."/>
            <person name="Sperling S."/>
            <person name="Stupka E."/>
            <person name="Sugiura K."/>
            <person name="Sultana R."/>
            <person name="Takenaka Y."/>
            <person name="Taki K."/>
            <person name="Tammoja K."/>
            <person name="Tan S.L."/>
            <person name="Tang S."/>
            <person name="Taylor M.S."/>
            <person name="Tegner J."/>
            <person name="Teichmann S.A."/>
            <person name="Ueda H.R."/>
            <person name="van Nimwegen E."/>
            <person name="Verardo R."/>
            <person name="Wei C.L."/>
            <person name="Yagi K."/>
            <person name="Yamanishi H."/>
            <person name="Zabarovsky E."/>
            <person name="Zhu S."/>
            <person name="Zimmer A."/>
            <person name="Hide W."/>
            <person name="Bult C."/>
            <person name="Grimmond S.M."/>
            <person name="Teasdale R.D."/>
            <person name="Liu E.T."/>
            <person name="Brusic V."/>
            <person name="Quackenbush J."/>
            <person name="Wahlestedt C."/>
            <person name="Mattick J.S."/>
            <person name="Hume D.A."/>
            <person name="Kai C."/>
            <person name="Sasaki D."/>
            <person name="Tomaru Y."/>
            <person name="Fukuda S."/>
            <person name="Kanamori-Katayama M."/>
            <person name="Suzuki M."/>
            <person name="Aoki J."/>
            <person name="Arakawa T."/>
            <person name="Iida J."/>
            <person name="Imamura K."/>
            <person name="Itoh M."/>
            <person name="Kato T."/>
            <person name="Kawaji H."/>
            <person name="Kawagashira N."/>
            <person name="Kawashima T."/>
            <person name="Kojima M."/>
            <person name="Kondo S."/>
            <person name="Konno H."/>
            <person name="Nakano K."/>
            <person name="Ninomiya N."/>
            <person name="Nishio T."/>
            <person name="Okada M."/>
            <person name="Plessy C."/>
            <person name="Shibata K."/>
            <person name="Shiraki T."/>
            <person name="Suzuki S."/>
            <person name="Tagami M."/>
            <person name="Waki K."/>
            <person name="Watahiki A."/>
            <person name="Okamura-Oho Y."/>
            <person name="Suzuki H."/>
            <person name="Kawai J."/>
            <person name="Hayashizaki Y."/>
        </authorList>
    </citation>
    <scope>NUCLEOTIDE SEQUENCE [LARGE SCALE MRNA] (ISOFORM 2)</scope>
    <source>
        <strain>C57BL/6J</strain>
        <tissue>Bone marrow</tissue>
        <tissue>Dendritic cell</tissue>
    </source>
</reference>
<reference key="3">
    <citation type="journal article" date="2004" name="Genome Res.">
        <title>The status, quality, and expansion of the NIH full-length cDNA project: the Mammalian Gene Collection (MGC).</title>
        <authorList>
            <consortium name="The MGC Project Team"/>
        </authorList>
    </citation>
    <scope>NUCLEOTIDE SEQUENCE [LARGE SCALE MRNA] (ISOFORMS 1 AND 3)</scope>
    <source>
        <strain>C57BL/6J</strain>
        <tissue>Brain</tissue>
        <tissue>Thymus</tissue>
    </source>
</reference>
<reference key="4">
    <citation type="journal article" date="2007" name="J. Immunol.">
        <title>A transcriptional repressor and corepressor induced by the STAT3-regulated anti-inflammatory signaling pathway.</title>
        <authorList>
            <person name="El Kasmi K.C."/>
            <person name="Smith A.M."/>
            <person name="Williams L."/>
            <person name="Neale G."/>
            <person name="Panopolous A."/>
            <person name="Watowich S.S."/>
            <person name="Hacker H."/>
            <person name="Foxwell B.M."/>
            <person name="Murray P.J."/>
        </authorList>
    </citation>
    <scope>TISSUE SPECIFICITY</scope>
    <scope>INDUCTION</scope>
</reference>
<reference key="5">
    <citation type="journal article" date="2010" name="Cell">
        <title>A tissue-specific atlas of mouse protein phosphorylation and expression.</title>
        <authorList>
            <person name="Huttlin E.L."/>
            <person name="Jedrychowski M.P."/>
            <person name="Elias J.E."/>
            <person name="Goswami T."/>
            <person name="Rad R."/>
            <person name="Beausoleil S.A."/>
            <person name="Villen J."/>
            <person name="Haas W."/>
            <person name="Sowa M.E."/>
            <person name="Gygi S.P."/>
        </authorList>
    </citation>
    <scope>IDENTIFICATION BY MASS SPECTROMETRY [LARGE SCALE ANALYSIS]</scope>
    <source>
        <tissue>Spleen</tissue>
    </source>
</reference>
<reference key="6">
    <citation type="journal article" date="2013" name="J. Exp. Med.">
        <title>Strawberry notch homologue 2 regulates osteoclast fusion by enhancing the expression of DC-STAMP.</title>
        <authorList>
            <person name="Maruyama K."/>
            <person name="Uematsu S."/>
            <person name="Kondo T."/>
            <person name="Takeuchi O."/>
            <person name="Martino M.M."/>
            <person name="Kawasaki T."/>
            <person name="Akira S."/>
        </authorList>
    </citation>
    <scope>FUNCTION</scope>
    <scope>INTERACTION WITH TAL1</scope>
    <scope>TISSUE SPECIFICITY</scope>
    <scope>INDUCTION</scope>
    <scope>DISRUPTION PHENOTYPE</scope>
</reference>
<reference key="7">
    <citation type="journal article" date="2015" name="Glia">
        <title>Strawberry notch homolog 2 is a novel inflammatory response factor predominantly but not exclusively expressed by astrocytes in the central nervous system.</title>
        <authorList>
            <person name="Grill M."/>
            <person name="Syme T.E."/>
            <person name="Nocon A.L."/>
            <person name="Lu A.Z."/>
            <person name="Hancock D."/>
            <person name="Rose-John S."/>
            <person name="Campbell I.L."/>
        </authorList>
    </citation>
    <scope>INDUCTION</scope>
</reference>
<protein>
    <recommendedName>
        <fullName>Protein strawberry notch homolog 2</fullName>
    </recommendedName>
</protein>
<dbReference type="EMBL" id="AJ512611">
    <property type="protein sequence ID" value="CAD54758.1"/>
    <property type="molecule type" value="mRNA"/>
</dbReference>
<dbReference type="EMBL" id="AK149806">
    <property type="protein sequence ID" value="BAE29097.1"/>
    <property type="molecule type" value="mRNA"/>
</dbReference>
<dbReference type="EMBL" id="AK155674">
    <property type="protein sequence ID" value="BAE33382.1"/>
    <property type="molecule type" value="mRNA"/>
</dbReference>
<dbReference type="EMBL" id="BC056369">
    <property type="protein sequence ID" value="AAH56369.1"/>
    <property type="molecule type" value="mRNA"/>
</dbReference>
<dbReference type="EMBL" id="BC064113">
    <property type="protein sequence ID" value="AAH64113.1"/>
    <property type="molecule type" value="mRNA"/>
</dbReference>
<dbReference type="CCDS" id="CCDS24008.1">
    <molecule id="Q7TNB8-1"/>
</dbReference>
<dbReference type="RefSeq" id="NP_001346564.1">
    <molecule id="Q7TNB8-2"/>
    <property type="nucleotide sequence ID" value="NM_001359635.1"/>
</dbReference>
<dbReference type="RefSeq" id="NP_001346565.1">
    <molecule id="Q7TNB8-3"/>
    <property type="nucleotide sequence ID" value="NM_001359636.1"/>
</dbReference>
<dbReference type="RefSeq" id="NP_906271.1">
    <molecule id="Q7TNB8-1"/>
    <property type="nucleotide sequence ID" value="NM_183426.2"/>
</dbReference>
<dbReference type="RefSeq" id="XP_006513555.1">
    <molecule id="Q7TNB8-1"/>
    <property type="nucleotide sequence ID" value="XM_006513492.1"/>
</dbReference>
<dbReference type="RefSeq" id="XP_006513556.1">
    <molecule id="Q7TNB8-1"/>
    <property type="nucleotide sequence ID" value="XM_006513493.1"/>
</dbReference>
<dbReference type="RefSeq" id="XP_006513557.1">
    <molecule id="Q7TNB8-1"/>
    <property type="nucleotide sequence ID" value="XM_006513494.1"/>
</dbReference>
<dbReference type="RefSeq" id="XP_006513558.1">
    <molecule id="Q7TNB8-2"/>
    <property type="nucleotide sequence ID" value="XM_006513495.3"/>
</dbReference>
<dbReference type="RefSeq" id="XP_006513559.1">
    <property type="nucleotide sequence ID" value="XM_006513496.2"/>
</dbReference>
<dbReference type="BioGRID" id="229712">
    <property type="interactions" value="1"/>
</dbReference>
<dbReference type="FunCoup" id="Q7TNB8">
    <property type="interactions" value="1770"/>
</dbReference>
<dbReference type="IntAct" id="Q7TNB8">
    <property type="interactions" value="2"/>
</dbReference>
<dbReference type="STRING" id="10090.ENSMUSP00000151590"/>
<dbReference type="GlyGen" id="Q7TNB8">
    <property type="glycosylation" value="1 site"/>
</dbReference>
<dbReference type="iPTMnet" id="Q7TNB8"/>
<dbReference type="PhosphoSitePlus" id="Q7TNB8"/>
<dbReference type="jPOST" id="Q7TNB8"/>
<dbReference type="PaxDb" id="10090-ENSMUSP00000041635"/>
<dbReference type="PeptideAtlas" id="Q7TNB8"/>
<dbReference type="ProteomicsDB" id="256840">
    <molecule id="Q7TNB8-1"/>
</dbReference>
<dbReference type="ProteomicsDB" id="256841">
    <molecule id="Q7TNB8-2"/>
</dbReference>
<dbReference type="ProteomicsDB" id="256842">
    <molecule id="Q7TNB8-3"/>
</dbReference>
<dbReference type="Pumba" id="Q7TNB8"/>
<dbReference type="Antibodypedia" id="63340">
    <property type="antibodies" value="33 antibodies from 9 providers"/>
</dbReference>
<dbReference type="DNASU" id="216161"/>
<dbReference type="Ensembl" id="ENSMUST00000042771.8">
    <molecule id="Q7TNB8-1"/>
    <property type="protein sequence ID" value="ENSMUSP00000041635.8"/>
    <property type="gene ID" value="ENSMUSG00000035673.11"/>
</dbReference>
<dbReference type="Ensembl" id="ENSMUST00000219260.2">
    <molecule id="Q7TNB8-1"/>
    <property type="protein sequence ID" value="ENSMUSP00000151590.2"/>
    <property type="gene ID" value="ENSMUSG00000035673.11"/>
</dbReference>
<dbReference type="GeneID" id="216161"/>
<dbReference type="KEGG" id="mmu:216161"/>
<dbReference type="UCSC" id="uc007gbm.1">
    <molecule id="Q7TNB8-2"/>
    <property type="organism name" value="mouse"/>
</dbReference>
<dbReference type="UCSC" id="uc007gbn.1">
    <molecule id="Q7TNB8-1"/>
    <property type="organism name" value="mouse"/>
</dbReference>
<dbReference type="UCSC" id="uc007gbq.1">
    <molecule id="Q7TNB8-3"/>
    <property type="organism name" value="mouse"/>
</dbReference>
<dbReference type="AGR" id="MGI:2448490"/>
<dbReference type="CTD" id="22904"/>
<dbReference type="MGI" id="MGI:2448490">
    <property type="gene designation" value="Sbno2"/>
</dbReference>
<dbReference type="VEuPathDB" id="HostDB:ENSMUSG00000035673"/>
<dbReference type="eggNOG" id="KOG1513">
    <property type="taxonomic scope" value="Eukaryota"/>
</dbReference>
<dbReference type="GeneTree" id="ENSGT00940000159946"/>
<dbReference type="HOGENOM" id="CLU_000212_0_0_1"/>
<dbReference type="InParanoid" id="Q7TNB8"/>
<dbReference type="OMA" id="QPPEPIY"/>
<dbReference type="OrthoDB" id="421838at2759"/>
<dbReference type="PhylomeDB" id="Q7TNB8"/>
<dbReference type="TreeFam" id="TF313526"/>
<dbReference type="BioGRID-ORCS" id="216161">
    <property type="hits" value="5 hits in 78 CRISPR screens"/>
</dbReference>
<dbReference type="ChiTaRS" id="Sbno2">
    <property type="organism name" value="mouse"/>
</dbReference>
<dbReference type="PRO" id="PR:Q7TNB8"/>
<dbReference type="Proteomes" id="UP000000589">
    <property type="component" value="Chromosome 10"/>
</dbReference>
<dbReference type="RNAct" id="Q7TNB8">
    <property type="molecule type" value="protein"/>
</dbReference>
<dbReference type="Bgee" id="ENSMUSG00000035673">
    <property type="expression patterns" value="Expressed in granulocyte and 219 other cell types or tissues"/>
</dbReference>
<dbReference type="ExpressionAtlas" id="Q7TNB8">
    <property type="expression patterns" value="baseline and differential"/>
</dbReference>
<dbReference type="GO" id="GO:0030282">
    <property type="term" value="P:bone mineralization"/>
    <property type="evidence" value="ECO:0000315"/>
    <property type="project" value="MGI"/>
</dbReference>
<dbReference type="GO" id="GO:0061430">
    <property type="term" value="P:bone trabecula morphogenesis"/>
    <property type="evidence" value="ECO:0000315"/>
    <property type="project" value="MGI"/>
</dbReference>
<dbReference type="GO" id="GO:0071348">
    <property type="term" value="P:cellular response to interleukin-11"/>
    <property type="evidence" value="ECO:0000314"/>
    <property type="project" value="UniProtKB"/>
</dbReference>
<dbReference type="GO" id="GO:0071354">
    <property type="term" value="P:cellular response to interleukin-6"/>
    <property type="evidence" value="ECO:0000314"/>
    <property type="project" value="UniProtKB"/>
</dbReference>
<dbReference type="GO" id="GO:1990830">
    <property type="term" value="P:cellular response to leukemia inhibitory factor"/>
    <property type="evidence" value="ECO:0000314"/>
    <property type="project" value="UniProtKB"/>
</dbReference>
<dbReference type="GO" id="GO:0071222">
    <property type="term" value="P:cellular response to lipopolysaccharide"/>
    <property type="evidence" value="ECO:0000314"/>
    <property type="project" value="UniProtKB"/>
</dbReference>
<dbReference type="GO" id="GO:0002281">
    <property type="term" value="P:macrophage activation involved in immune response"/>
    <property type="evidence" value="ECO:0000315"/>
    <property type="project" value="UniProtKB"/>
</dbReference>
<dbReference type="GO" id="GO:0072674">
    <property type="term" value="P:multinuclear osteoclast differentiation"/>
    <property type="evidence" value="ECO:0000315"/>
    <property type="project" value="MGI"/>
</dbReference>
<dbReference type="GO" id="GO:0045892">
    <property type="term" value="P:negative regulation of DNA-templated transcription"/>
    <property type="evidence" value="ECO:0000315"/>
    <property type="project" value="UniProtKB"/>
</dbReference>
<dbReference type="GO" id="GO:0030316">
    <property type="term" value="P:osteoclast differentiation"/>
    <property type="evidence" value="ECO:0000315"/>
    <property type="project" value="MGI"/>
</dbReference>
<dbReference type="GO" id="GO:0072675">
    <property type="term" value="P:osteoclast fusion"/>
    <property type="evidence" value="ECO:0000315"/>
    <property type="project" value="MGI"/>
</dbReference>
<dbReference type="GO" id="GO:0045944">
    <property type="term" value="P:positive regulation of transcription by RNA polymerase II"/>
    <property type="evidence" value="ECO:0000315"/>
    <property type="project" value="MGI"/>
</dbReference>
<dbReference type="GO" id="GO:0050727">
    <property type="term" value="P:regulation of inflammatory response"/>
    <property type="evidence" value="ECO:0000315"/>
    <property type="project" value="UniProtKB"/>
</dbReference>
<dbReference type="FunFam" id="3.40.50.300:FF:000342">
    <property type="entry name" value="Protein strawberry notch homolog 2"/>
    <property type="match status" value="1"/>
</dbReference>
<dbReference type="Gene3D" id="3.40.50.300">
    <property type="entry name" value="P-loop containing nucleotide triphosphate hydrolases"/>
    <property type="match status" value="1"/>
</dbReference>
<dbReference type="InterPro" id="IPR027417">
    <property type="entry name" value="P-loop_NTPase"/>
</dbReference>
<dbReference type="InterPro" id="IPR026937">
    <property type="entry name" value="SBNO_Helicase_C_dom"/>
</dbReference>
<dbReference type="InterPro" id="IPR026741">
    <property type="entry name" value="SNO"/>
</dbReference>
<dbReference type="InterPro" id="IPR039187">
    <property type="entry name" value="SNO_AAA"/>
</dbReference>
<dbReference type="PANTHER" id="PTHR12706:SF5">
    <property type="entry name" value="PROTEIN STRAWBERRY NOTCH HOMOLOG 2"/>
    <property type="match status" value="1"/>
</dbReference>
<dbReference type="PANTHER" id="PTHR12706">
    <property type="entry name" value="STRAWBERRY NOTCH-RELATED"/>
    <property type="match status" value="1"/>
</dbReference>
<dbReference type="Pfam" id="PF13872">
    <property type="entry name" value="AAA_34"/>
    <property type="match status" value="1"/>
</dbReference>
<dbReference type="Pfam" id="PF13871">
    <property type="entry name" value="Helicase_C_4"/>
    <property type="match status" value="1"/>
</dbReference>
<dbReference type="Pfam" id="PF25373">
    <property type="entry name" value="SBNO"/>
    <property type="match status" value="1"/>
</dbReference>
<dbReference type="SUPFAM" id="SSF52540">
    <property type="entry name" value="P-loop containing nucleoside triphosphate hydrolases"/>
    <property type="match status" value="2"/>
</dbReference>
<organism>
    <name type="scientific">Mus musculus</name>
    <name type="common">Mouse</name>
    <dbReference type="NCBI Taxonomy" id="10090"/>
    <lineage>
        <taxon>Eukaryota</taxon>
        <taxon>Metazoa</taxon>
        <taxon>Chordata</taxon>
        <taxon>Craniata</taxon>
        <taxon>Vertebrata</taxon>
        <taxon>Euteleostomi</taxon>
        <taxon>Mammalia</taxon>
        <taxon>Eutheria</taxon>
        <taxon>Euarchontoglires</taxon>
        <taxon>Glires</taxon>
        <taxon>Rodentia</taxon>
        <taxon>Myomorpha</taxon>
        <taxon>Muroidea</taxon>
        <taxon>Muridae</taxon>
        <taxon>Murinae</taxon>
        <taxon>Mus</taxon>
        <taxon>Mus</taxon>
    </lineage>
</organism>
<proteinExistence type="evidence at protein level"/>
<evidence type="ECO:0000250" key="1">
    <source>
        <dbReference type="UniProtKB" id="Q9Y2G9"/>
    </source>
</evidence>
<evidence type="ECO:0000256" key="2">
    <source>
        <dbReference type="SAM" id="MobiDB-lite"/>
    </source>
</evidence>
<evidence type="ECO:0000269" key="3">
    <source>
    </source>
</evidence>
<evidence type="ECO:0000269" key="4">
    <source>
    </source>
</evidence>
<evidence type="ECO:0000269" key="5">
    <source>
    </source>
</evidence>
<evidence type="ECO:0000303" key="6">
    <source>
    </source>
</evidence>
<evidence type="ECO:0000303" key="7">
    <source>
    </source>
</evidence>
<evidence type="ECO:0000303" key="8">
    <source ref="1"/>
</evidence>
<evidence type="ECO:0000305" key="9"/>